<gene>
    <name evidence="21 24" type="primary">Foxk1</name>
    <name evidence="20" type="synonym">Mnf</name>
</gene>
<proteinExistence type="evidence at protein level"/>
<protein>
    <recommendedName>
        <fullName evidence="21">Forkhead box protein K1</fullName>
    </recommendedName>
    <alternativeName>
        <fullName evidence="20 22">Myocyte nuclear factor</fullName>
        <shortName evidence="20 22">MNF</shortName>
    </alternativeName>
</protein>
<accession>P42128</accession>
<accession>O35939</accession>
<accession>Q3UHI6</accession>
<accession>Q3UN67</accession>
<sequence length="719" mass="74920">MAEVGEDSGARALLALRSAPCSPVLCAAAAAAAFPATTSPPPPAQPPPGPPALPAEPGPGPVPSTVATATTTAPALVAAAAASVRQSPGPALARLEGREFEFLMRQPSVTIGRNSSQGSVDLSMGLSSFISRRHLQLSFQEPHFYLRCLGKNGVFVDGAFQRRGAPALQLPQQCTFRFPSTAIKIQFTSLYHKEEAPASPLRPLYPQISPLKIHIPEPDLRSLVSPIPSPTGTISVPNSCPASPRGAGSSSYRFVQNVTSDLQLAAEFAAKAASEQQADASGGDSPKDESKPPYSYAQLIVQAISSAQDRQLTLSGIYAHITKHYPYYRTADKGWQNSIRHNLSLNRYFIKVPRSQEEPGKGSFWRIDPASEAKLVEQAFRKRRQRGVSCFRTPFGPLSSRSAPASPTHPGLMSPRSSGLQTPECLSREGSPIPHDPDLGSKLASVPEYRYSQSAPGSPVSAQPVIMAVPPRPSNLVAKPVAYMPASIVTSQQPSGHAIHVVQQAPTVTMVRVVTTSANSANGYILASQGSTGTSHDTAGTAVLDLGNEARGLEEKPTIAFATIPAASRVIQTVASQMAPGVPGHTVTILQPATPVTIGQHHLPVRAVTQNGKHAVPTNSLTGNAYALSSPLQLLAAQASSSTPVVITRVCEVGPEEPAAAVSVAANAAPTPAASTTTSASSSGEPEVKRSRVEEPGGTATTQPTAMAATGPQGPGTGE</sequence>
<comment type="function">
    <text evidence="1 6 7 12 14 15 16 17 18 19">Transcriptional regulator involved in different processes such as glucose metabolism, aerobic glycolysis, muscle cell differentiation and autophagy (PubMed:25402684, PubMed:29861159, PubMed:30700909). Recognizes and binds the forkhead DNA sequence motif (5'-GTAAACA-3') and can both act as a transcription activator or repressor, depending on the context (PubMed:25402684, PubMed:29861159, PubMed:30700909). Together with FOXK2, acts as a key regulator of metabolic reprogramming towards aerobic glycolysis, a process in which glucose is converted to lactate in the presence of oxygen (PubMed:30700909). Acts by promoting expression of enzymes for glycolysis (such as hexokinase-2 (HK2), phosphofructokinase, pyruvate kinase (PKLR) and lactate dehydrogenase), while suppressing further oxidation of pyruvate in the mitochondria by up-regulating pyruvate dehydrogenase kinases PDK1 and PDK4 (PubMed:30700909). Probably plays a role in gluconeogenesis during overnight fasting, when lactate from white adipose tissue and muscle is the main substrate (PubMed:30700909). Involved in mTORC1-mediated metabolic reprogramming: in response to mTORC1 signaling, translocates into the nucleus and regulates the expression of genes associated with glycolysis and downstream anabolic pathways, such as HIF1A, thereby regulating glucose metabolism (PubMed:29861159). Together with FOXK2, acts as a negative regulator of autophagy in skeletal muscle: in response to starvation, enters the nucleus, binds the promoters of autophagy genes and represses their expression, preventing proteolysis of skeletal muscle proteins (PubMed:25402684). Acts as a transcriptional regulator of the myogenic progenitor cell population in skeletal muscle (PubMed:12446708, PubMed:22956541, PubMed:8007964, PubMed:9271401). Binds to the upstream enhancer region (CCAC box) of myoglobin (MB) gene, regulating the myogenic progenitor cell population (PubMed:8007964, PubMed:9271401). Promotes muscle progenitor cell proliferation by repressing the transcriptional activity of FOXO4, thereby inhibiting myogenic differentiation (PubMed:12446708, PubMed:22956541). Involved in remodeling processes of adult muscles that occur in response to physiological stimuli (PubMed:22956541, PubMed:9271401). Required to correct temporal orchestration of molecular and cellular events necessary for muscle repair (PubMed:10792059). Represses myogenic differentiation by inhibiting MEFC activity (PubMed:22956541). Positively regulates Wnt/beta-catenin signaling by translocating DVL into the nucleus (By similarity). Reduces virus replication, probably by binding the interferon stimulated response element (ISRE) to promote antiviral gene expression (By similarity). Accessory component of the polycomb repressive deubiquitinase (PR-DUB) complex; recruits the PR-DUB complex to specific FOXK1-bound genes (PubMed:32747411).</text>
</comment>
<comment type="subunit">
    <text evidence="1 5 10 12 14 15 17">Interacts with SIN3A and SIN3B (via PAH2) to form a complex which represses transcription (PubMed:10620510). Component of SIN3A-, but not SIN3B-, containing multiprotein complexes (PubMed:25402684). Interacts with FOXO4 and MEF2C; both interactions inhibit FOXO4 and MEF2C transactivation activity (PubMed:22956541). Interacts (when phosphorylated) with YWHAE/14-3-3-epsilon; promotes sequestration in the cytoplasm and leads to impaired ability to bind DNA (PubMed:29861159). Interacts with FHL2 (PubMed:20013826). Interacts with SRF (By similarity). Interacts with DVL2 and DVL3; the interaction induces DVL2 nuclear translocation (By similarity). Interacts with BAP1 (when phosphorylated) (By similarity). Accessory component of the polycomb repressive deubiquitinase (PR-DUB) complex, at least composed of BAP1, one of ASXL1, ASXL2 or (probably) ASXL3 and one of MBD5 or MBD6 (PubMed:32747411). The PR-DUB core associates with a number of accessory proteins, including FOXK1, FOXK2, KDM1B, HCFC1 and OGT (By similarity).</text>
</comment>
<comment type="interaction">
    <interactant intactId="EBI-878270">
        <id>P42128</id>
    </interactant>
    <interactant intactId="EBI-591466">
        <id>Q62141-2</id>
        <label>Sin3b</label>
    </interactant>
    <organismsDiffer>false</organismsDiffer>
    <experiments>11</experiments>
</comment>
<comment type="subcellular location">
    <subcellularLocation>
        <location evidence="10 14 15">Nucleus</location>
    </subcellularLocation>
    <subcellularLocation>
        <location evidence="14 15">Cytoplasm</location>
    </subcellularLocation>
    <text evidence="15">Translocation to the nucleus is regulated by phosphorylation: phosphorylation by GSK3 (GSK3A or GSK3B) promotes interaction with 14-3-3 proteins and sequestration in the cytoplasm (PubMed:29861159). Dephosphorylation promotes translocation to the nucleus (PubMed:29861159).</text>
</comment>
<comment type="tissue specificity">
    <text evidence="8 13 18 19">Expressed in tissues and cells in which the myoglobin gene is transcriptionally active including cardiac and skeletal myocytes, brain and kidney (PubMed:8007964, PubMed:9271401). In the adult brain, expressed in the piriform cortex and the indusium griseum. In the hippocampus, expression is localized to the dentate gyrus and CA3 area (PubMed:16376864). In the cerebellum, expression is confined to the Purkinje cell layer (PubMed:16376864). Present in neuroretinal cells: expressed in rod bipolar cells, amacrine cells and ganglion cells (at protein level) (PubMed:23714736).</text>
</comment>
<comment type="developmental stage">
    <text evidence="9">Expressed at 13.5 dpc in developing muscle, limbs, trunk, and heart.</text>
</comment>
<comment type="PTM">
    <text evidence="15">Phosphorylation by GSK3 (GSK3A or GSK3B) promotes interaction with YWHAE/14-3-3-epsilon and retention in the cytoplasm (PubMed:29861159). In response to mTORC1 signaling, phosphorylation by GSK3 is prevented, leading to translocation to the nucleus (PubMed:29861159).</text>
</comment>
<comment type="disruption phenotype">
    <text evidence="6 7">Mutants exhibit a growth deficiency and a severe impairment in skeletal muscle regeneration following injury (PubMed:10792059, PubMed:12446708). They show atrophic skeletal muscles and their satellite cell function is impaired (PubMed:10792059). Double knockouts of CDKN1A and FOXK1 don't show significant differences compared to wild-type (PubMed:12446708).</text>
</comment>
<comment type="caution">
    <text evidence="14 15">The mode of regulation of FOXK1 by mTORC1 is controversial. According to a first report, mTORC1 signaling promotes phosphorylation of FOXK1 and nuclear exclusion (PubMed:25402684). According to a second report, mTORC1 signaling prevents phosphorylation by GSK3 (GSK3A or GSK3B), thereby promoting translocation to the nucleus (PubMed:29861159).</text>
</comment>
<comment type="sequence caution" evidence="23">
    <conflict type="frameshift">
        <sequence resource="EMBL-CDS" id="AAA37529"/>
    </conflict>
</comment>
<comment type="sequence caution" evidence="23">
    <conflict type="frameshift">
        <sequence resource="EMBL-CDS" id="AAB69641"/>
    </conflict>
</comment>
<comment type="sequence caution" evidence="23">
    <conflict type="erroneous initiation">
        <sequence resource="EMBL-CDS" id="BAE25880"/>
    </conflict>
    <text>Truncated N-terminus.</text>
</comment>
<name>FOXK1_MOUSE</name>
<keyword id="KW-0002">3D-structure</keyword>
<keyword id="KW-0007">Acetylation</keyword>
<keyword id="KW-0010">Activator</keyword>
<keyword id="KW-0963">Cytoplasm</keyword>
<keyword id="KW-0217">Developmental protein</keyword>
<keyword id="KW-0221">Differentiation</keyword>
<keyword id="KW-0238">DNA-binding</keyword>
<keyword id="KW-0488">Methylation</keyword>
<keyword id="KW-0517">Myogenesis</keyword>
<keyword id="KW-0539">Nucleus</keyword>
<keyword id="KW-0597">Phosphoprotein</keyword>
<keyword id="KW-1185">Reference proteome</keyword>
<keyword id="KW-0678">Repressor</keyword>
<keyword id="KW-0804">Transcription</keyword>
<keyword id="KW-0805">Transcription regulation</keyword>
<keyword id="KW-0833">Ubl conjugation pathway</keyword>
<feature type="initiator methionine" description="Removed" evidence="1">
    <location>
        <position position="1"/>
    </location>
</feature>
<feature type="chain" id="PRO_0000091857" description="Forkhead box protein K1">
    <location>
        <begin position="2"/>
        <end position="719"/>
    </location>
</feature>
<feature type="domain" description="FHA" evidence="2">
    <location>
        <begin position="109"/>
        <end position="161"/>
    </location>
</feature>
<feature type="DNA-binding region" description="Fork-head" evidence="3">
    <location>
        <begin position="291"/>
        <end position="386"/>
    </location>
</feature>
<feature type="region of interest" description="Interaction with SIN3A and SIN3B" evidence="5 11">
    <location>
        <begin position="2"/>
        <end position="40"/>
    </location>
</feature>
<feature type="region of interest" description="Disordered" evidence="4">
    <location>
        <begin position="35"/>
        <end position="67"/>
    </location>
</feature>
<feature type="region of interest" description="Required for interaction with FOXO4 and MEF2C" evidence="12">
    <location>
        <begin position="81"/>
        <end position="406"/>
    </location>
</feature>
<feature type="region of interest" description="Disordered" evidence="4">
    <location>
        <begin position="399"/>
        <end position="443"/>
    </location>
</feature>
<feature type="region of interest" description="Disordered" evidence="4">
    <location>
        <begin position="665"/>
        <end position="719"/>
    </location>
</feature>
<feature type="compositionally biased region" description="Pro residues" evidence="4">
    <location>
        <begin position="38"/>
        <end position="62"/>
    </location>
</feature>
<feature type="compositionally biased region" description="Low complexity" evidence="4">
    <location>
        <begin position="665"/>
        <end position="685"/>
    </location>
</feature>
<feature type="compositionally biased region" description="Basic and acidic residues" evidence="4">
    <location>
        <begin position="686"/>
        <end position="695"/>
    </location>
</feature>
<feature type="compositionally biased region" description="Low complexity" evidence="4">
    <location>
        <begin position="696"/>
        <end position="712"/>
    </location>
</feature>
<feature type="modified residue" description="N-acetylalanine" evidence="1">
    <location>
        <position position="2"/>
    </location>
</feature>
<feature type="modified residue" description="Phosphoserine" evidence="1">
    <location>
        <position position="87"/>
    </location>
</feature>
<feature type="modified residue" description="Omega-N-methylarginine" evidence="27">
    <location>
        <position position="147"/>
    </location>
</feature>
<feature type="modified residue" description="Omega-N-methylarginine" evidence="1">
    <location>
        <position position="177"/>
    </location>
</feature>
<feature type="modified residue" description="Phosphoserine" evidence="26">
    <location>
        <position position="199"/>
    </location>
</feature>
<feature type="modified residue" description="Phosphoserine" evidence="26">
    <location>
        <position position="209"/>
    </location>
</feature>
<feature type="modified residue" description="Phosphoserine" evidence="26">
    <location>
        <position position="225"/>
    </location>
</feature>
<feature type="modified residue" description="Phosphoserine" evidence="26">
    <location>
        <position position="229"/>
    </location>
</feature>
<feature type="modified residue" description="Phosphothreonine" evidence="26">
    <location>
        <position position="231"/>
    </location>
</feature>
<feature type="modified residue" description="Phosphothreonine" evidence="26">
    <location>
        <position position="233"/>
    </location>
</feature>
<feature type="modified residue" description="Phosphoserine" evidence="26">
    <location>
        <position position="239"/>
    </location>
</feature>
<feature type="modified residue" description="Phosphoserine" evidence="26">
    <location>
        <position position="243"/>
    </location>
</feature>
<feature type="modified residue" description="Phosphoserine" evidence="26">
    <location>
        <position position="281"/>
    </location>
</feature>
<feature type="modified residue" description="Phosphoserine" evidence="26">
    <location>
        <position position="285"/>
    </location>
</feature>
<feature type="modified residue" description="Phosphoserine" evidence="15">
    <location>
        <position position="402"/>
    </location>
</feature>
<feature type="modified residue" description="Phosphoserine" evidence="15">
    <location>
        <position position="406"/>
    </location>
</feature>
<feature type="modified residue" description="Phosphothreonine" evidence="1">
    <location>
        <position position="408"/>
    </location>
</feature>
<feature type="modified residue" description="Phosphoserine" evidence="1">
    <location>
        <position position="414"/>
    </location>
</feature>
<feature type="modified residue" description="Phosphothreonine" evidence="25 26">
    <location>
        <position position="422"/>
    </location>
</feature>
<feature type="modified residue" description="Phosphoserine" evidence="15 26">
    <location>
        <position position="427"/>
    </location>
</feature>
<feature type="modified residue" description="Phosphoserine" evidence="15 26">
    <location>
        <position position="431"/>
    </location>
</feature>
<feature type="modified residue" description="Phosphoserine" evidence="1">
    <location>
        <position position="445"/>
    </location>
</feature>
<feature type="mutagenesis site" description="Decreases DNA-binding. No effect on transcriptional repression." evidence="12">
    <original>K</original>
    <variation>A</variation>
    <location>
        <position position="333"/>
    </location>
</feature>
<feature type="mutagenesis site" description="Abolishes DNA-binding. No effect on transcriptional repression." evidence="12">
    <original>R</original>
    <variation>A</variation>
    <location>
        <position position="340"/>
    </location>
</feature>
<feature type="mutagenesis site" description="Decreased phosphorylation by GSK3A and interaction with 14-3-3 proteins." evidence="15">
    <original>SAPAS</original>
    <variation>AAPAA</variation>
    <location>
        <begin position="402"/>
        <end position="406"/>
    </location>
</feature>
<feature type="mutagenesis site" description="Decreased phosphorylation by GSK3A and interaction with 14-3-3 proteins." evidence="15">
    <original>SREGS</original>
    <variation>AREGA</variation>
    <location>
        <begin position="427"/>
        <end position="431"/>
    </location>
</feature>
<feature type="sequence conflict" description="In Ref. 1; AAA37529 and 3; AAB69641." evidence="23" ref="1 3">
    <location>
        <position position="43"/>
    </location>
</feature>
<feature type="sequence conflict" description="In Ref. 1; AAA37529." evidence="23" ref="1">
    <original>SA</original>
    <variation>RS</variation>
    <location>
        <begin position="402"/>
        <end position="403"/>
    </location>
</feature>
<feature type="sequence conflict" description="In Ref. 3; AAB69641." evidence="23" ref="3">
    <original>PTHPG</original>
    <variation>HTSHA</variation>
    <location>
        <begin position="407"/>
        <end position="411"/>
    </location>
</feature>
<feature type="sequence conflict" description="In Ref. 1; AAA37529." evidence="23" ref="1">
    <original>R</original>
    <variation>A</variation>
    <location>
        <position position="551"/>
    </location>
</feature>
<feature type="strand" evidence="28">
    <location>
        <begin position="292"/>
        <end position="294"/>
    </location>
</feature>
<feature type="helix" evidence="28">
    <location>
        <begin position="298"/>
        <end position="304"/>
    </location>
</feature>
<feature type="strand" evidence="28">
    <location>
        <begin position="307"/>
        <end position="312"/>
    </location>
</feature>
<feature type="helix" evidence="28">
    <location>
        <begin position="314"/>
        <end position="324"/>
    </location>
</feature>
<feature type="strand" evidence="28">
    <location>
        <begin position="326"/>
        <end position="330"/>
    </location>
</feature>
<feature type="helix" evidence="28">
    <location>
        <begin position="335"/>
        <end position="345"/>
    </location>
</feature>
<feature type="strand" evidence="28">
    <location>
        <begin position="347"/>
        <end position="356"/>
    </location>
</feature>
<feature type="strand" evidence="28">
    <location>
        <begin position="360"/>
        <end position="362"/>
    </location>
</feature>
<feature type="strand" evidence="28">
    <location>
        <begin position="365"/>
        <end position="367"/>
    </location>
</feature>
<feature type="helix" evidence="28">
    <location>
        <begin position="372"/>
        <end position="380"/>
    </location>
</feature>
<reference key="1">
    <citation type="journal article" date="1994" name="Mol. Cell. Biol.">
        <title>Myocyte nuclear factor, a novel winged-helix transcription factor under both developmental and neural regulation in striated myocytes.</title>
        <authorList>
            <person name="Bassel-Duby R."/>
            <person name="Hernandez M.D."/>
            <person name="Yang Q."/>
            <person name="Rochelle J.M."/>
            <person name="Seldin M.F."/>
            <person name="Williams R.S."/>
        </authorList>
    </citation>
    <scope>NUCLEOTIDE SEQUENCE [MRNA]</scope>
    <scope>FUNCTION</scope>
    <scope>TISSUE SPECIFICITY</scope>
    <scope>PHOSPHORYLATION</scope>
    <source>
        <tissue>Pancreatic acinar cell</tissue>
    </source>
</reference>
<reference key="2">
    <citation type="journal article" date="2005" name="Science">
        <title>The transcriptional landscape of the mammalian genome.</title>
        <authorList>
            <person name="Carninci P."/>
            <person name="Kasukawa T."/>
            <person name="Katayama S."/>
            <person name="Gough J."/>
            <person name="Frith M.C."/>
            <person name="Maeda N."/>
            <person name="Oyama R."/>
            <person name="Ravasi T."/>
            <person name="Lenhard B."/>
            <person name="Wells C."/>
            <person name="Kodzius R."/>
            <person name="Shimokawa K."/>
            <person name="Bajic V.B."/>
            <person name="Brenner S.E."/>
            <person name="Batalov S."/>
            <person name="Forrest A.R."/>
            <person name="Zavolan M."/>
            <person name="Davis M.J."/>
            <person name="Wilming L.G."/>
            <person name="Aidinis V."/>
            <person name="Allen J.E."/>
            <person name="Ambesi-Impiombato A."/>
            <person name="Apweiler R."/>
            <person name="Aturaliya R.N."/>
            <person name="Bailey T.L."/>
            <person name="Bansal M."/>
            <person name="Baxter L."/>
            <person name="Beisel K.W."/>
            <person name="Bersano T."/>
            <person name="Bono H."/>
            <person name="Chalk A.M."/>
            <person name="Chiu K.P."/>
            <person name="Choudhary V."/>
            <person name="Christoffels A."/>
            <person name="Clutterbuck D.R."/>
            <person name="Crowe M.L."/>
            <person name="Dalla E."/>
            <person name="Dalrymple B.P."/>
            <person name="de Bono B."/>
            <person name="Della Gatta G."/>
            <person name="di Bernardo D."/>
            <person name="Down T."/>
            <person name="Engstrom P."/>
            <person name="Fagiolini M."/>
            <person name="Faulkner G."/>
            <person name="Fletcher C.F."/>
            <person name="Fukushima T."/>
            <person name="Furuno M."/>
            <person name="Futaki S."/>
            <person name="Gariboldi M."/>
            <person name="Georgii-Hemming P."/>
            <person name="Gingeras T.R."/>
            <person name="Gojobori T."/>
            <person name="Green R.E."/>
            <person name="Gustincich S."/>
            <person name="Harbers M."/>
            <person name="Hayashi Y."/>
            <person name="Hensch T.K."/>
            <person name="Hirokawa N."/>
            <person name="Hill D."/>
            <person name="Huminiecki L."/>
            <person name="Iacono M."/>
            <person name="Ikeo K."/>
            <person name="Iwama A."/>
            <person name="Ishikawa T."/>
            <person name="Jakt M."/>
            <person name="Kanapin A."/>
            <person name="Katoh M."/>
            <person name="Kawasawa Y."/>
            <person name="Kelso J."/>
            <person name="Kitamura H."/>
            <person name="Kitano H."/>
            <person name="Kollias G."/>
            <person name="Krishnan S.P."/>
            <person name="Kruger A."/>
            <person name="Kummerfeld S.K."/>
            <person name="Kurochkin I.V."/>
            <person name="Lareau L.F."/>
            <person name="Lazarevic D."/>
            <person name="Lipovich L."/>
            <person name="Liu J."/>
            <person name="Liuni S."/>
            <person name="McWilliam S."/>
            <person name="Madan Babu M."/>
            <person name="Madera M."/>
            <person name="Marchionni L."/>
            <person name="Matsuda H."/>
            <person name="Matsuzawa S."/>
            <person name="Miki H."/>
            <person name="Mignone F."/>
            <person name="Miyake S."/>
            <person name="Morris K."/>
            <person name="Mottagui-Tabar S."/>
            <person name="Mulder N."/>
            <person name="Nakano N."/>
            <person name="Nakauchi H."/>
            <person name="Ng P."/>
            <person name="Nilsson R."/>
            <person name="Nishiguchi S."/>
            <person name="Nishikawa S."/>
            <person name="Nori F."/>
            <person name="Ohara O."/>
            <person name="Okazaki Y."/>
            <person name="Orlando V."/>
            <person name="Pang K.C."/>
            <person name="Pavan W.J."/>
            <person name="Pavesi G."/>
            <person name="Pesole G."/>
            <person name="Petrovsky N."/>
            <person name="Piazza S."/>
            <person name="Reed J."/>
            <person name="Reid J.F."/>
            <person name="Ring B.Z."/>
            <person name="Ringwald M."/>
            <person name="Rost B."/>
            <person name="Ruan Y."/>
            <person name="Salzberg S.L."/>
            <person name="Sandelin A."/>
            <person name="Schneider C."/>
            <person name="Schoenbach C."/>
            <person name="Sekiguchi K."/>
            <person name="Semple C.A."/>
            <person name="Seno S."/>
            <person name="Sessa L."/>
            <person name="Sheng Y."/>
            <person name="Shibata Y."/>
            <person name="Shimada H."/>
            <person name="Shimada K."/>
            <person name="Silva D."/>
            <person name="Sinclair B."/>
            <person name="Sperling S."/>
            <person name="Stupka E."/>
            <person name="Sugiura K."/>
            <person name="Sultana R."/>
            <person name="Takenaka Y."/>
            <person name="Taki K."/>
            <person name="Tammoja K."/>
            <person name="Tan S.L."/>
            <person name="Tang S."/>
            <person name="Taylor M.S."/>
            <person name="Tegner J."/>
            <person name="Teichmann S.A."/>
            <person name="Ueda H.R."/>
            <person name="van Nimwegen E."/>
            <person name="Verardo R."/>
            <person name="Wei C.L."/>
            <person name="Yagi K."/>
            <person name="Yamanishi H."/>
            <person name="Zabarovsky E."/>
            <person name="Zhu S."/>
            <person name="Zimmer A."/>
            <person name="Hide W."/>
            <person name="Bult C."/>
            <person name="Grimmond S.M."/>
            <person name="Teasdale R.D."/>
            <person name="Liu E.T."/>
            <person name="Brusic V."/>
            <person name="Quackenbush J."/>
            <person name="Wahlestedt C."/>
            <person name="Mattick J.S."/>
            <person name="Hume D.A."/>
            <person name="Kai C."/>
            <person name="Sasaki D."/>
            <person name="Tomaru Y."/>
            <person name="Fukuda S."/>
            <person name="Kanamori-Katayama M."/>
            <person name="Suzuki M."/>
            <person name="Aoki J."/>
            <person name="Arakawa T."/>
            <person name="Iida J."/>
            <person name="Imamura K."/>
            <person name="Itoh M."/>
            <person name="Kato T."/>
            <person name="Kawaji H."/>
            <person name="Kawagashira N."/>
            <person name="Kawashima T."/>
            <person name="Kojima M."/>
            <person name="Kondo S."/>
            <person name="Konno H."/>
            <person name="Nakano K."/>
            <person name="Ninomiya N."/>
            <person name="Nishio T."/>
            <person name="Okada M."/>
            <person name="Plessy C."/>
            <person name="Shibata K."/>
            <person name="Shiraki T."/>
            <person name="Suzuki S."/>
            <person name="Tagami M."/>
            <person name="Waki K."/>
            <person name="Watahiki A."/>
            <person name="Okamura-Oho Y."/>
            <person name="Suzuki H."/>
            <person name="Kawai J."/>
            <person name="Hayashizaki Y."/>
        </authorList>
    </citation>
    <scope>NUCLEOTIDE SEQUENCE [LARGE SCALE MRNA]</scope>
    <source>
        <strain>C57BL/6J</strain>
        <tissue>Diencephalon</tissue>
    </source>
</reference>
<reference key="3">
    <citation type="journal article" date="1997" name="Mol. Cell. Biol.">
        <title>Transient expression of a winged-helix protein, MNF-beta, during myogenesis.</title>
        <authorList>
            <person name="Yang Q."/>
            <person name="Bassel-Duby R."/>
            <person name="Williams R.S."/>
        </authorList>
    </citation>
    <scope>NUCLEOTIDE SEQUENCE [MRNA] OF 1-411</scope>
    <scope>FUNCTION</scope>
    <scope>TISSUE SPECIFICITY</scope>
    <source>
        <tissue>Skeletal muscle</tissue>
    </source>
</reference>
<reference key="4">
    <citation type="journal article" date="2000" name="Biochem. J.">
        <title>The winged-helix/forkhead protein myocyte nuclear factor beta (MNF-beta) forms a co-repressor complex with mammalian Sin3B.</title>
        <authorList>
            <person name="Yang Q."/>
            <person name="Kong Y."/>
            <person name="Rothermel B."/>
            <person name="Garry D.J."/>
            <person name="Bassel-Duby R."/>
            <person name="Williams R.S."/>
        </authorList>
    </citation>
    <scope>INTERACTION WITH SIN3B</scope>
    <source>
        <tissue>Heart</tissue>
    </source>
</reference>
<reference key="5">
    <citation type="journal article" date="2000" name="Proc. Natl. Acad. Sci. U.S.A.">
        <title>Myogenic stem cell function is impaired in mice lacking the forkhead/winged helix protein MNF.</title>
        <authorList>
            <person name="Garry D.J."/>
            <person name="Meeson A."/>
            <person name="Elterman J."/>
            <person name="Zhao Y."/>
            <person name="Yang P."/>
            <person name="Bassel-Duby R."/>
            <person name="Williams R.S."/>
        </authorList>
    </citation>
    <scope>FUNCTION</scope>
    <scope>DISRUPTION PHENOTYPE</scope>
</reference>
<reference key="6">
    <citation type="journal article" date="2003" name="J. Biol. Chem.">
        <title>Absence of p21CIP rescues myogenic progenitor cell proliferative and regenerative capacity in Foxk1 null mice.</title>
        <authorList>
            <person name="Hawke T.J."/>
            <person name="Jiang N."/>
            <person name="Garry D.J."/>
        </authorList>
    </citation>
    <scope>FUNCTION</scope>
    <scope>DISRUPTION PHENOTYPE</scope>
</reference>
<reference key="7">
    <citation type="journal article" date="2006" name="Brain Res.">
        <title>Identification of forkhead transcription factors in cortical and dopaminergic areas of the adult murine brain.</title>
        <authorList>
            <person name="Wijchers P.J.E.C."/>
            <person name="Hoekman M.F.M."/>
            <person name="Burbach J.P.H."/>
            <person name="Smidt M.P."/>
        </authorList>
    </citation>
    <scope>TISSUE SPECIFICITY</scope>
</reference>
<reference key="8">
    <citation type="journal article" date="2007" name="EMBO J.">
        <title>Sox15 and Fhl3 transcriptionally coactivate Foxk1 and regulate myogenic progenitor cells.</title>
        <authorList>
            <person name="Meeson A.P."/>
            <person name="Shi X."/>
            <person name="Alexander M.S."/>
            <person name="Williams R.S."/>
            <person name="Allen R.E."/>
            <person name="Jiang N."/>
            <person name="Adham I.M."/>
            <person name="Goetsch S.C."/>
            <person name="Hammer R.E."/>
            <person name="Garry D.J."/>
        </authorList>
    </citation>
    <scope>DEVELOPMENTAL STAGE</scope>
</reference>
<reference key="9">
    <citation type="journal article" date="2007" name="Proc. Natl. Acad. Sci. U.S.A.">
        <title>Large-scale phosphorylation analysis of mouse liver.</title>
        <authorList>
            <person name="Villen J."/>
            <person name="Beausoleil S.A."/>
            <person name="Gerber S.A."/>
            <person name="Gygi S.P."/>
        </authorList>
    </citation>
    <scope>PHOSPHORYLATION [LARGE SCALE ANALYSIS] AT THR-422</scope>
    <scope>IDENTIFICATION BY MASS SPECTROMETRY [LARGE SCALE ANALYSIS]</scope>
    <source>
        <tissue>Liver</tissue>
    </source>
</reference>
<reference key="10">
    <citation type="journal article" date="2010" name="Cell">
        <title>A tissue-specific atlas of mouse protein phosphorylation and expression.</title>
        <authorList>
            <person name="Huttlin E.L."/>
            <person name="Jedrychowski M.P."/>
            <person name="Elias J.E."/>
            <person name="Goswami T."/>
            <person name="Rad R."/>
            <person name="Beausoleil S.A."/>
            <person name="Villen J."/>
            <person name="Haas W."/>
            <person name="Sowa M.E."/>
            <person name="Gygi S.P."/>
        </authorList>
    </citation>
    <scope>PHOSPHORYLATION [LARGE SCALE ANALYSIS] AT SER-199; SER-209; SER-225; SER-229; THR-231; THR-233; SER-239; SER-243; SER-281; SER-285; THR-422; SER-427 AND SER-431</scope>
    <scope>IDENTIFICATION BY MASS SPECTROMETRY [LARGE SCALE ANALYSIS]</scope>
    <source>
        <tissue>Brain</tissue>
        <tissue>Brown adipose tissue</tissue>
        <tissue>Heart</tissue>
        <tissue>Kidney</tissue>
        <tissue>Liver</tissue>
        <tissue>Lung</tissue>
        <tissue>Pancreas</tissue>
        <tissue>Spleen</tissue>
        <tissue>Testis</tissue>
    </source>
</reference>
<reference key="11">
    <citation type="journal article" date="2010" name="Stem Cells">
        <title>Fhl2 interacts with Foxk1 and corepresses Foxo4 activity in myogenic progenitors.</title>
        <authorList>
            <person name="Shi X."/>
            <person name="Bowlin K.M."/>
            <person name="Garry D.J."/>
        </authorList>
    </citation>
    <scope>SUBCELLULAR LOCATION</scope>
    <scope>INTERACTION WITH FHL2</scope>
</reference>
<reference key="12">
    <citation type="journal article" date="2012" name="J. Cell Sci.">
        <title>Foxk1 promotes cell proliferation and represses myogenic differentiation by regulating Foxo4 and Mef2.</title>
        <authorList>
            <person name="Shi X."/>
            <person name="Wallis A.M."/>
            <person name="Gerard R.D."/>
            <person name="Voelker K.A."/>
            <person name="Grange R.W."/>
            <person name="DePinho R.A."/>
            <person name="Garry M.G."/>
            <person name="Garry D.J."/>
        </authorList>
    </citation>
    <scope>FUNCTION</scope>
    <scope>INTERACTION WITH FOXO4 AND MEF2C</scope>
    <scope>MUTAGENESIS OF LYS-333 AND ARG-340</scope>
    <scope>DNA-BINDING</scope>
</reference>
<reference key="13">
    <citation type="journal article" date="2012" name="Mol. Cell. Biochem.">
        <title>Sin3 interacts with Foxk1 and regulates myogenic progenitors.</title>
        <authorList>
            <person name="Shi X."/>
            <person name="Garry D.J."/>
        </authorList>
    </citation>
    <scope>INTERACTION WITH SIN3A AND SIN3B</scope>
</reference>
<reference key="14">
    <citation type="journal article" date="2013" name="Gene Expr. Patterns">
        <title>The transcription factor Foxk1 is expressed in developing and adult mouse neuroretina.</title>
        <authorList>
            <person name="Sel S."/>
            <person name="Muenzenberg C."/>
            <person name="Nass N."/>
            <person name="Kalinski T."/>
            <person name="Datan M."/>
            <person name="Auffarth G.U."/>
            <person name="Toeteberg-Harms M."/>
            <person name="Zenkel M."/>
            <person name="Kruse F.E."/>
            <person name="Paulsen F."/>
            <person name="Schicht M."/>
        </authorList>
    </citation>
    <scope>TISSUE SPECIFICITY</scope>
</reference>
<reference key="15">
    <citation type="journal article" date="2014" name="Mol. Cell. Proteomics">
        <title>Immunoaffinity enrichment and mass spectrometry analysis of protein methylation.</title>
        <authorList>
            <person name="Guo A."/>
            <person name="Gu H."/>
            <person name="Zhou J."/>
            <person name="Mulhern D."/>
            <person name="Wang Y."/>
            <person name="Lee K.A."/>
            <person name="Yang V."/>
            <person name="Aguiar M."/>
            <person name="Kornhauser J."/>
            <person name="Jia X."/>
            <person name="Ren J."/>
            <person name="Beausoleil S.A."/>
            <person name="Silva J.C."/>
            <person name="Vemulapalli V."/>
            <person name="Bedford M.T."/>
            <person name="Comb M.J."/>
        </authorList>
    </citation>
    <scope>METHYLATION [LARGE SCALE ANALYSIS] AT ARG-147</scope>
    <scope>IDENTIFICATION BY MASS SPECTROMETRY [LARGE SCALE ANALYSIS]</scope>
    <source>
        <tissue>Embryo</tissue>
    </source>
</reference>
<reference key="16">
    <citation type="journal article" date="2014" name="Nat. Cell Biol.">
        <title>Foxk proteins repress the initiation of starvation-induced atrophy and autophagy programs.</title>
        <authorList>
            <person name="Bowman C.J."/>
            <person name="Ayer D.E."/>
            <person name="Dynlacht B.D."/>
        </authorList>
    </citation>
    <scope>FUNCTION</scope>
    <scope>SUBCELLULAR LOCATION</scope>
    <scope>INTERACTION WITH SIN3A</scope>
</reference>
<reference key="17">
    <citation type="journal article" date="2018" name="Mol. Cell">
        <title>mTORC1 promotes metabolic reprogramming by the suppression of GSK3-dependent foxk1 phosphorylation.</title>
        <authorList>
            <person name="He L."/>
            <person name="Gomes A.P."/>
            <person name="Wang X."/>
            <person name="Yoon S.O."/>
            <person name="Lee G."/>
            <person name="Nagiec M.J."/>
            <person name="Cho S."/>
            <person name="Chavez A."/>
            <person name="Islam T."/>
            <person name="Yu Y."/>
            <person name="Asara J.M."/>
            <person name="Kim B.Y."/>
            <person name="Blenis J."/>
        </authorList>
    </citation>
    <scope>FUNCTION</scope>
    <scope>SUBCELLULAR LOCATION</scope>
    <scope>INTERACTION WITH YWHAE</scope>
    <scope>PHOSPHORYLATION AT SER-402; SER-406; SER-427 AND SER-431</scope>
    <scope>MUTAGENESIS OF 402-SER--SER-406 AND 417-SER--SER-431</scope>
</reference>
<reference key="18">
    <citation type="journal article" date="2019" name="Nature">
        <title>FOXK1 and FOXK2 regulate aerobic glycolysis.</title>
        <authorList>
            <person name="Sukonina V."/>
            <person name="Ma H."/>
            <person name="Zhang W."/>
            <person name="Bartesaghi S."/>
            <person name="Subhash S."/>
            <person name="Heglind M."/>
            <person name="Foyn H."/>
            <person name="Betz M.J."/>
            <person name="Nilsson D."/>
            <person name="Lidell M.E."/>
            <person name="Naumann J."/>
            <person name="Haufs-Brusberg S."/>
            <person name="Palmgren H."/>
            <person name="Mondal T."/>
            <person name="Beg M."/>
            <person name="Jedrychowski M.P."/>
            <person name="Tasken K."/>
            <person name="Pfeifer A."/>
            <person name="Peng X.R."/>
            <person name="Kanduri C."/>
            <person name="Enerbaeck S."/>
        </authorList>
    </citation>
    <scope>FUNCTION</scope>
</reference>
<reference key="19">
    <citation type="journal article" date="2020" name="Genome Res.">
        <title>PR-DUB maintains the expression of critical genes through FOXK1/2- and ASXL1/2/3-dependent recruitment to chromatin and H2AK119ub1 deubiquitination.</title>
        <authorList>
            <person name="Kolovos P."/>
            <person name="Nishimura K."/>
            <person name="Sankar A."/>
            <person name="Sidoli S."/>
            <person name="Cloos P.A."/>
            <person name="Helin K."/>
            <person name="Christensen J."/>
        </authorList>
    </citation>
    <scope>FUNCTION</scope>
</reference>
<reference key="20">
    <citation type="journal article" date="2002" name="J. Biomol. NMR">
        <title>1H, 15N and 13C resonance assignments for the DNA-binding domain of myocyte nuclear factor (Foxk1).</title>
        <authorList>
            <person name="Chuang W.J."/>
            <person name="Yeh I.J."/>
            <person name="Hsieh Y.H."/>
            <person name="Liu P.P."/>
            <person name="Chen S.W."/>
            <person name="Jeng W.Y."/>
        </authorList>
    </citation>
    <scope>STRUCTURE BY NMR OF 289-389</scope>
</reference>
<evidence type="ECO:0000250" key="1">
    <source>
        <dbReference type="UniProtKB" id="P85037"/>
    </source>
</evidence>
<evidence type="ECO:0000255" key="2">
    <source>
        <dbReference type="PROSITE-ProRule" id="PRU00086"/>
    </source>
</evidence>
<evidence type="ECO:0000255" key="3">
    <source>
        <dbReference type="PROSITE-ProRule" id="PRU00089"/>
    </source>
</evidence>
<evidence type="ECO:0000256" key="4">
    <source>
        <dbReference type="SAM" id="MobiDB-lite"/>
    </source>
</evidence>
<evidence type="ECO:0000269" key="5">
    <source>
    </source>
</evidence>
<evidence type="ECO:0000269" key="6">
    <source>
    </source>
</evidence>
<evidence type="ECO:0000269" key="7">
    <source>
    </source>
</evidence>
<evidence type="ECO:0000269" key="8">
    <source>
    </source>
</evidence>
<evidence type="ECO:0000269" key="9">
    <source>
    </source>
</evidence>
<evidence type="ECO:0000269" key="10">
    <source>
    </source>
</evidence>
<evidence type="ECO:0000269" key="11">
    <source>
    </source>
</evidence>
<evidence type="ECO:0000269" key="12">
    <source>
    </source>
</evidence>
<evidence type="ECO:0000269" key="13">
    <source>
    </source>
</evidence>
<evidence type="ECO:0000269" key="14">
    <source>
    </source>
</evidence>
<evidence type="ECO:0000269" key="15">
    <source>
    </source>
</evidence>
<evidence type="ECO:0000269" key="16">
    <source>
    </source>
</evidence>
<evidence type="ECO:0000269" key="17">
    <source>
    </source>
</evidence>
<evidence type="ECO:0000269" key="18">
    <source>
    </source>
</evidence>
<evidence type="ECO:0000269" key="19">
    <source>
    </source>
</evidence>
<evidence type="ECO:0000303" key="20">
    <source>
    </source>
</evidence>
<evidence type="ECO:0000303" key="21">
    <source>
    </source>
</evidence>
<evidence type="ECO:0000303" key="22">
    <source>
    </source>
</evidence>
<evidence type="ECO:0000305" key="23"/>
<evidence type="ECO:0000312" key="24">
    <source>
        <dbReference type="MGI" id="MGI:1347488"/>
    </source>
</evidence>
<evidence type="ECO:0007744" key="25">
    <source>
    </source>
</evidence>
<evidence type="ECO:0007744" key="26">
    <source>
    </source>
</evidence>
<evidence type="ECO:0007744" key="27">
    <source>
    </source>
</evidence>
<evidence type="ECO:0007829" key="28">
    <source>
        <dbReference type="PDB" id="2A3S"/>
    </source>
</evidence>
<organism>
    <name type="scientific">Mus musculus</name>
    <name type="common">Mouse</name>
    <dbReference type="NCBI Taxonomy" id="10090"/>
    <lineage>
        <taxon>Eukaryota</taxon>
        <taxon>Metazoa</taxon>
        <taxon>Chordata</taxon>
        <taxon>Craniata</taxon>
        <taxon>Vertebrata</taxon>
        <taxon>Euteleostomi</taxon>
        <taxon>Mammalia</taxon>
        <taxon>Eutheria</taxon>
        <taxon>Euarchontoglires</taxon>
        <taxon>Glires</taxon>
        <taxon>Rodentia</taxon>
        <taxon>Myomorpha</taxon>
        <taxon>Muroidea</taxon>
        <taxon>Muridae</taxon>
        <taxon>Murinae</taxon>
        <taxon>Mus</taxon>
        <taxon>Mus</taxon>
    </lineage>
</organism>
<dbReference type="EMBL" id="L26507">
    <property type="protein sequence ID" value="AAA37529.1"/>
    <property type="status" value="ALT_FRAME"/>
    <property type="molecule type" value="mRNA"/>
</dbReference>
<dbReference type="EMBL" id="AK144418">
    <property type="protein sequence ID" value="BAE25880.1"/>
    <property type="status" value="ALT_INIT"/>
    <property type="molecule type" value="mRNA"/>
</dbReference>
<dbReference type="EMBL" id="AK147375">
    <property type="protein sequence ID" value="BAE27871.1"/>
    <property type="molecule type" value="mRNA"/>
</dbReference>
<dbReference type="EMBL" id="U95016">
    <property type="protein sequence ID" value="AAB69641.1"/>
    <property type="status" value="ALT_FRAME"/>
    <property type="molecule type" value="mRNA"/>
</dbReference>
<dbReference type="CCDS" id="CCDS19826.1"/>
<dbReference type="PIR" id="A56051">
    <property type="entry name" value="A56051"/>
</dbReference>
<dbReference type="RefSeq" id="NP_951031.2">
    <property type="nucleotide sequence ID" value="NM_199068.2"/>
</dbReference>
<dbReference type="PDB" id="2A3S">
    <property type="method" value="NMR"/>
    <property type="chains" value="A=289-389"/>
</dbReference>
<dbReference type="PDB" id="2D2W">
    <property type="method" value="NMR"/>
    <property type="chains" value="A=289-389"/>
</dbReference>
<dbReference type="PDBsum" id="2A3S"/>
<dbReference type="PDBsum" id="2D2W"/>
<dbReference type="BMRB" id="P42128"/>
<dbReference type="SMR" id="P42128"/>
<dbReference type="BioGRID" id="201459">
    <property type="interactions" value="6"/>
</dbReference>
<dbReference type="FunCoup" id="P42128">
    <property type="interactions" value="3078"/>
</dbReference>
<dbReference type="IntAct" id="P42128">
    <property type="interactions" value="2"/>
</dbReference>
<dbReference type="MINT" id="P42128"/>
<dbReference type="STRING" id="10090.ENSMUSP00000072616"/>
<dbReference type="GlyGen" id="P42128">
    <property type="glycosylation" value="8 sites, 1 O-linked glycan (7 sites)"/>
</dbReference>
<dbReference type="iPTMnet" id="P42128"/>
<dbReference type="PhosphoSitePlus" id="P42128"/>
<dbReference type="SwissPalm" id="P42128"/>
<dbReference type="jPOST" id="P42128"/>
<dbReference type="PaxDb" id="10090-ENSMUSP00000072616"/>
<dbReference type="PeptideAtlas" id="P42128"/>
<dbReference type="ProteomicsDB" id="271796"/>
<dbReference type="Pumba" id="P42128"/>
<dbReference type="Antibodypedia" id="11250">
    <property type="antibodies" value="219 antibodies from 30 providers"/>
</dbReference>
<dbReference type="DNASU" id="17425"/>
<dbReference type="Ensembl" id="ENSMUST00000072837.7">
    <property type="protein sequence ID" value="ENSMUSP00000072616.6"/>
    <property type="gene ID" value="ENSMUSG00000056493.10"/>
</dbReference>
<dbReference type="GeneID" id="17425"/>
<dbReference type="KEGG" id="mmu:17425"/>
<dbReference type="UCSC" id="uc009aio.1">
    <property type="organism name" value="mouse"/>
</dbReference>
<dbReference type="AGR" id="MGI:1347488"/>
<dbReference type="CTD" id="221937"/>
<dbReference type="MGI" id="MGI:1347488">
    <property type="gene designation" value="Foxk1"/>
</dbReference>
<dbReference type="VEuPathDB" id="HostDB:ENSMUSG00000056493"/>
<dbReference type="eggNOG" id="KOG2294">
    <property type="taxonomic scope" value="Eukaryota"/>
</dbReference>
<dbReference type="GeneTree" id="ENSGT00940000159507"/>
<dbReference type="HOGENOM" id="CLU_022344_0_0_1"/>
<dbReference type="InParanoid" id="P42128"/>
<dbReference type="OMA" id="ITRVCEV"/>
<dbReference type="OrthoDB" id="691130at2759"/>
<dbReference type="PhylomeDB" id="P42128"/>
<dbReference type="TreeFam" id="TF325718"/>
<dbReference type="Reactome" id="R-MMU-5689603">
    <property type="pathway name" value="UCH proteinases"/>
</dbReference>
<dbReference type="BioGRID-ORCS" id="17425">
    <property type="hits" value="2 hits in 79 CRISPR screens"/>
</dbReference>
<dbReference type="ChiTaRS" id="Foxk1">
    <property type="organism name" value="mouse"/>
</dbReference>
<dbReference type="EvolutionaryTrace" id="P42128"/>
<dbReference type="PRO" id="PR:P42128"/>
<dbReference type="Proteomes" id="UP000000589">
    <property type="component" value="Chromosome 5"/>
</dbReference>
<dbReference type="RNAct" id="P42128">
    <property type="molecule type" value="protein"/>
</dbReference>
<dbReference type="Bgee" id="ENSMUSG00000056493">
    <property type="expression patterns" value="Expressed in ascending aorta and 233 other cell types or tissues"/>
</dbReference>
<dbReference type="ExpressionAtlas" id="P42128">
    <property type="expression patterns" value="baseline and differential"/>
</dbReference>
<dbReference type="GO" id="GO:0005737">
    <property type="term" value="C:cytoplasm"/>
    <property type="evidence" value="ECO:0007669"/>
    <property type="project" value="UniProtKB-SubCell"/>
</dbReference>
<dbReference type="GO" id="GO:0005634">
    <property type="term" value="C:nucleus"/>
    <property type="evidence" value="ECO:0000305"/>
    <property type="project" value="UniProtKB"/>
</dbReference>
<dbReference type="GO" id="GO:0071889">
    <property type="term" value="F:14-3-3 protein binding"/>
    <property type="evidence" value="ECO:0007669"/>
    <property type="project" value="Ensembl"/>
</dbReference>
<dbReference type="GO" id="GO:0003677">
    <property type="term" value="F:DNA binding"/>
    <property type="evidence" value="ECO:0000314"/>
    <property type="project" value="UniProtKB"/>
</dbReference>
<dbReference type="GO" id="GO:0000981">
    <property type="term" value="F:DNA-binding transcription factor activity, RNA polymerase II-specific"/>
    <property type="evidence" value="ECO:0000314"/>
    <property type="project" value="NTNU_SB"/>
</dbReference>
<dbReference type="GO" id="GO:0001227">
    <property type="term" value="F:DNA-binding transcription repressor activity, RNA polymerase II-specific"/>
    <property type="evidence" value="ECO:0007669"/>
    <property type="project" value="Ensembl"/>
</dbReference>
<dbReference type="GO" id="GO:0000977">
    <property type="term" value="F:RNA polymerase II transcription regulatory region sequence-specific DNA binding"/>
    <property type="evidence" value="ECO:0000314"/>
    <property type="project" value="NTNU_SB"/>
</dbReference>
<dbReference type="GO" id="GO:0043565">
    <property type="term" value="F:sequence-specific DNA binding"/>
    <property type="evidence" value="ECO:0000314"/>
    <property type="project" value="UniProtKB"/>
</dbReference>
<dbReference type="GO" id="GO:0061621">
    <property type="term" value="P:canonical glycolysis"/>
    <property type="evidence" value="ECO:0007669"/>
    <property type="project" value="Ensembl"/>
</dbReference>
<dbReference type="GO" id="GO:0030154">
    <property type="term" value="P:cell differentiation"/>
    <property type="evidence" value="ECO:0007669"/>
    <property type="project" value="UniProtKB-KW"/>
</dbReference>
<dbReference type="GO" id="GO:0001678">
    <property type="term" value="P:intracellular glucose homeostasis"/>
    <property type="evidence" value="ECO:0007669"/>
    <property type="project" value="Ensembl"/>
</dbReference>
<dbReference type="GO" id="GO:0007517">
    <property type="term" value="P:muscle organ development"/>
    <property type="evidence" value="ECO:0007669"/>
    <property type="project" value="UniProtKB-KW"/>
</dbReference>
<dbReference type="GO" id="GO:0010507">
    <property type="term" value="P:negative regulation of autophagy"/>
    <property type="evidence" value="ECO:0007669"/>
    <property type="project" value="Ensembl"/>
</dbReference>
<dbReference type="GO" id="GO:0045786">
    <property type="term" value="P:negative regulation of cell cycle"/>
    <property type="evidence" value="ECO:0000304"/>
    <property type="project" value="UniProtKB"/>
</dbReference>
<dbReference type="GO" id="GO:0030308">
    <property type="term" value="P:negative regulation of cell growth"/>
    <property type="evidence" value="ECO:0000314"/>
    <property type="project" value="UniProtKB"/>
</dbReference>
<dbReference type="GO" id="GO:0045892">
    <property type="term" value="P:negative regulation of DNA-templated transcription"/>
    <property type="evidence" value="ECO:0000314"/>
    <property type="project" value="UniProtKB"/>
</dbReference>
<dbReference type="GO" id="GO:0045893">
    <property type="term" value="P:positive regulation of DNA-templated transcription"/>
    <property type="evidence" value="ECO:0000314"/>
    <property type="project" value="UniProtKB"/>
</dbReference>
<dbReference type="GO" id="GO:0010906">
    <property type="term" value="P:regulation of glucose metabolic process"/>
    <property type="evidence" value="ECO:0007669"/>
    <property type="project" value="Ensembl"/>
</dbReference>
<dbReference type="GO" id="GO:0006357">
    <property type="term" value="P:regulation of transcription by RNA polymerase II"/>
    <property type="evidence" value="ECO:0000314"/>
    <property type="project" value="NTNU_SB"/>
</dbReference>
<dbReference type="GO" id="GO:0042594">
    <property type="term" value="P:response to starvation"/>
    <property type="evidence" value="ECO:0007669"/>
    <property type="project" value="Ensembl"/>
</dbReference>
<dbReference type="CDD" id="cd20054">
    <property type="entry name" value="FH_FOXK1"/>
    <property type="match status" value="1"/>
</dbReference>
<dbReference type="FunFam" id="2.60.200.20:FF:000049">
    <property type="entry name" value="Forkhead box protein K1"/>
    <property type="match status" value="1"/>
</dbReference>
<dbReference type="FunFam" id="1.10.10.10:FF:000030">
    <property type="entry name" value="Forkhead box protein K2"/>
    <property type="match status" value="1"/>
</dbReference>
<dbReference type="Gene3D" id="2.60.200.20">
    <property type="match status" value="1"/>
</dbReference>
<dbReference type="Gene3D" id="1.10.10.10">
    <property type="entry name" value="Winged helix-like DNA-binding domain superfamily/Winged helix DNA-binding domain"/>
    <property type="match status" value="1"/>
</dbReference>
<dbReference type="InterPro" id="IPR047394">
    <property type="entry name" value="FH_FOXK1"/>
</dbReference>
<dbReference type="InterPro" id="IPR000253">
    <property type="entry name" value="FHA_dom"/>
</dbReference>
<dbReference type="InterPro" id="IPR001766">
    <property type="entry name" value="Fork_head_dom"/>
</dbReference>
<dbReference type="InterPro" id="IPR008984">
    <property type="entry name" value="SMAD_FHA_dom_sf"/>
</dbReference>
<dbReference type="InterPro" id="IPR018122">
    <property type="entry name" value="TF_fork_head_CS_1"/>
</dbReference>
<dbReference type="InterPro" id="IPR030456">
    <property type="entry name" value="TF_fork_head_CS_2"/>
</dbReference>
<dbReference type="InterPro" id="IPR036388">
    <property type="entry name" value="WH-like_DNA-bd_sf"/>
</dbReference>
<dbReference type="InterPro" id="IPR036390">
    <property type="entry name" value="WH_DNA-bd_sf"/>
</dbReference>
<dbReference type="PANTHER" id="PTHR45881">
    <property type="entry name" value="CHECKPOINT SUPPRESSOR 1-LIKE, ISOFORM A-RELATED"/>
    <property type="match status" value="1"/>
</dbReference>
<dbReference type="PANTHER" id="PTHR45881:SF4">
    <property type="entry name" value="FORKHEAD BOX PROTEIN K1"/>
    <property type="match status" value="1"/>
</dbReference>
<dbReference type="Pfam" id="PF00498">
    <property type="entry name" value="FHA"/>
    <property type="match status" value="1"/>
</dbReference>
<dbReference type="Pfam" id="PF00250">
    <property type="entry name" value="Forkhead"/>
    <property type="match status" value="1"/>
</dbReference>
<dbReference type="PRINTS" id="PR00053">
    <property type="entry name" value="FORKHEAD"/>
</dbReference>
<dbReference type="SMART" id="SM00339">
    <property type="entry name" value="FH"/>
    <property type="match status" value="1"/>
</dbReference>
<dbReference type="SMART" id="SM00240">
    <property type="entry name" value="FHA"/>
    <property type="match status" value="1"/>
</dbReference>
<dbReference type="SUPFAM" id="SSF49879">
    <property type="entry name" value="SMAD/FHA domain"/>
    <property type="match status" value="1"/>
</dbReference>
<dbReference type="SUPFAM" id="SSF46785">
    <property type="entry name" value="Winged helix' DNA-binding domain"/>
    <property type="match status" value="1"/>
</dbReference>
<dbReference type="PROSITE" id="PS50006">
    <property type="entry name" value="FHA_DOMAIN"/>
    <property type="match status" value="1"/>
</dbReference>
<dbReference type="PROSITE" id="PS00657">
    <property type="entry name" value="FORK_HEAD_1"/>
    <property type="match status" value="1"/>
</dbReference>
<dbReference type="PROSITE" id="PS00658">
    <property type="entry name" value="FORK_HEAD_2"/>
    <property type="match status" value="1"/>
</dbReference>
<dbReference type="PROSITE" id="PS50039">
    <property type="entry name" value="FORK_HEAD_3"/>
    <property type="match status" value="1"/>
</dbReference>